<name>GLK_YERPY</name>
<sequence length="323" mass="34664">MTTYALVGDVGGTNARLALCAVATGEILQAKTYSGLEYESLEDVIKQYLSEHQAKVTDACIAIACPITGDWVAMTNHTWAFSIAAMQQNLGLDHLEVINDFTAVSMAIPVLPAQDVLQFGGTQPQPGKPVAVYGAGTGLGVAHLVNVDRRWISLAGEGGHVDFAPNSEEEDQILAVLRQELGHVSAERVLSGPGLVNLYRAIVISDARLPEKLAPKDITARALADSCTDCRRALSLFCVIMGRFGGNLALNLSTFGGVYIAGGIVPRFMEFFKASGFRAAFEDKGRFKDFLQDIPVYMITHPQPGLLGAGAYLRQKLGYELSS</sequence>
<gene>
    <name evidence="1" type="primary">glk</name>
    <name type="ordered locus">YPK_1444</name>
</gene>
<accession>B1JG01</accession>
<dbReference type="EC" id="2.7.1.2" evidence="1"/>
<dbReference type="EMBL" id="CP000950">
    <property type="protein sequence ID" value="ACA67737.1"/>
    <property type="molecule type" value="Genomic_DNA"/>
</dbReference>
<dbReference type="RefSeq" id="WP_002211615.1">
    <property type="nucleotide sequence ID" value="NZ_CP009792.1"/>
</dbReference>
<dbReference type="SMR" id="B1JG01"/>
<dbReference type="GeneID" id="57975727"/>
<dbReference type="KEGG" id="ypy:YPK_1444"/>
<dbReference type="PATRIC" id="fig|502800.11.peg.2081"/>
<dbReference type="GO" id="GO:0005829">
    <property type="term" value="C:cytosol"/>
    <property type="evidence" value="ECO:0007669"/>
    <property type="project" value="TreeGrafter"/>
</dbReference>
<dbReference type="GO" id="GO:0005524">
    <property type="term" value="F:ATP binding"/>
    <property type="evidence" value="ECO:0007669"/>
    <property type="project" value="UniProtKB-UniRule"/>
</dbReference>
<dbReference type="GO" id="GO:0005536">
    <property type="term" value="F:D-glucose binding"/>
    <property type="evidence" value="ECO:0007669"/>
    <property type="project" value="InterPro"/>
</dbReference>
<dbReference type="GO" id="GO:0004340">
    <property type="term" value="F:glucokinase activity"/>
    <property type="evidence" value="ECO:0007669"/>
    <property type="project" value="UniProtKB-UniRule"/>
</dbReference>
<dbReference type="GO" id="GO:0006096">
    <property type="term" value="P:glycolytic process"/>
    <property type="evidence" value="ECO:0007669"/>
    <property type="project" value="UniProtKB-UniRule"/>
</dbReference>
<dbReference type="CDD" id="cd24008">
    <property type="entry name" value="ASKHA_NBD_GLK"/>
    <property type="match status" value="1"/>
</dbReference>
<dbReference type="FunFam" id="3.30.420.40:FF:000045">
    <property type="entry name" value="Glucokinase"/>
    <property type="match status" value="1"/>
</dbReference>
<dbReference type="FunFam" id="3.40.367.20:FF:000002">
    <property type="entry name" value="Glucokinase"/>
    <property type="match status" value="1"/>
</dbReference>
<dbReference type="Gene3D" id="3.30.420.40">
    <property type="match status" value="1"/>
</dbReference>
<dbReference type="Gene3D" id="3.40.367.20">
    <property type="match status" value="1"/>
</dbReference>
<dbReference type="HAMAP" id="MF_00524">
    <property type="entry name" value="Glucokinase"/>
    <property type="match status" value="1"/>
</dbReference>
<dbReference type="InterPro" id="IPR043129">
    <property type="entry name" value="ATPase_NBD"/>
</dbReference>
<dbReference type="InterPro" id="IPR050201">
    <property type="entry name" value="Bacterial_glucokinase"/>
</dbReference>
<dbReference type="InterPro" id="IPR003836">
    <property type="entry name" value="Glucokinase"/>
</dbReference>
<dbReference type="NCBIfam" id="TIGR00749">
    <property type="entry name" value="glk"/>
    <property type="match status" value="1"/>
</dbReference>
<dbReference type="NCBIfam" id="NF001414">
    <property type="entry name" value="PRK00292.1-1"/>
    <property type="match status" value="1"/>
</dbReference>
<dbReference type="NCBIfam" id="NF001416">
    <property type="entry name" value="PRK00292.1-3"/>
    <property type="match status" value="1"/>
</dbReference>
<dbReference type="NCBIfam" id="NF009073">
    <property type="entry name" value="PRK12408.1"/>
    <property type="match status" value="1"/>
</dbReference>
<dbReference type="PANTHER" id="PTHR47690">
    <property type="entry name" value="GLUCOKINASE"/>
    <property type="match status" value="1"/>
</dbReference>
<dbReference type="PANTHER" id="PTHR47690:SF1">
    <property type="entry name" value="GLUCOKINASE"/>
    <property type="match status" value="1"/>
</dbReference>
<dbReference type="Pfam" id="PF02685">
    <property type="entry name" value="Glucokinase"/>
    <property type="match status" value="1"/>
</dbReference>
<dbReference type="SUPFAM" id="SSF53067">
    <property type="entry name" value="Actin-like ATPase domain"/>
    <property type="match status" value="1"/>
</dbReference>
<reference key="1">
    <citation type="submission" date="2008-02" db="EMBL/GenBank/DDBJ databases">
        <title>Complete sequence of Yersinia pseudotuberculosis YPIII.</title>
        <authorList>
            <consortium name="US DOE Joint Genome Institute"/>
            <person name="Copeland A."/>
            <person name="Lucas S."/>
            <person name="Lapidus A."/>
            <person name="Glavina del Rio T."/>
            <person name="Dalin E."/>
            <person name="Tice H."/>
            <person name="Bruce D."/>
            <person name="Goodwin L."/>
            <person name="Pitluck S."/>
            <person name="Munk A.C."/>
            <person name="Brettin T."/>
            <person name="Detter J.C."/>
            <person name="Han C."/>
            <person name="Tapia R."/>
            <person name="Schmutz J."/>
            <person name="Larimer F."/>
            <person name="Land M."/>
            <person name="Hauser L."/>
            <person name="Challacombe J.F."/>
            <person name="Green L."/>
            <person name="Lindler L.E."/>
            <person name="Nikolich M.P."/>
            <person name="Richardson P."/>
        </authorList>
    </citation>
    <scope>NUCLEOTIDE SEQUENCE [LARGE SCALE GENOMIC DNA]</scope>
    <source>
        <strain>YPIII</strain>
    </source>
</reference>
<feature type="chain" id="PRO_1000127733" description="Glucokinase">
    <location>
        <begin position="1"/>
        <end position="323"/>
    </location>
</feature>
<feature type="binding site" evidence="1">
    <location>
        <begin position="8"/>
        <end position="13"/>
    </location>
    <ligand>
        <name>ATP</name>
        <dbReference type="ChEBI" id="CHEBI:30616"/>
    </ligand>
</feature>
<proteinExistence type="inferred from homology"/>
<protein>
    <recommendedName>
        <fullName evidence="1">Glucokinase</fullName>
        <ecNumber evidence="1">2.7.1.2</ecNumber>
    </recommendedName>
    <alternativeName>
        <fullName evidence="1">Glucose kinase</fullName>
    </alternativeName>
</protein>
<keyword id="KW-0067">ATP-binding</keyword>
<keyword id="KW-0963">Cytoplasm</keyword>
<keyword id="KW-0324">Glycolysis</keyword>
<keyword id="KW-0418">Kinase</keyword>
<keyword id="KW-0547">Nucleotide-binding</keyword>
<keyword id="KW-0808">Transferase</keyword>
<evidence type="ECO:0000255" key="1">
    <source>
        <dbReference type="HAMAP-Rule" id="MF_00524"/>
    </source>
</evidence>
<comment type="catalytic activity">
    <reaction evidence="1">
        <text>D-glucose + ATP = D-glucose 6-phosphate + ADP + H(+)</text>
        <dbReference type="Rhea" id="RHEA:17825"/>
        <dbReference type="ChEBI" id="CHEBI:4167"/>
        <dbReference type="ChEBI" id="CHEBI:15378"/>
        <dbReference type="ChEBI" id="CHEBI:30616"/>
        <dbReference type="ChEBI" id="CHEBI:61548"/>
        <dbReference type="ChEBI" id="CHEBI:456216"/>
        <dbReference type="EC" id="2.7.1.2"/>
    </reaction>
</comment>
<comment type="subcellular location">
    <subcellularLocation>
        <location evidence="1">Cytoplasm</location>
    </subcellularLocation>
</comment>
<comment type="similarity">
    <text evidence="1">Belongs to the bacterial glucokinase family.</text>
</comment>
<organism>
    <name type="scientific">Yersinia pseudotuberculosis serotype O:3 (strain YPIII)</name>
    <dbReference type="NCBI Taxonomy" id="502800"/>
    <lineage>
        <taxon>Bacteria</taxon>
        <taxon>Pseudomonadati</taxon>
        <taxon>Pseudomonadota</taxon>
        <taxon>Gammaproteobacteria</taxon>
        <taxon>Enterobacterales</taxon>
        <taxon>Yersiniaceae</taxon>
        <taxon>Yersinia</taxon>
    </lineage>
</organism>